<proteinExistence type="evidence at transcript level"/>
<evidence type="ECO:0000250" key="1"/>
<evidence type="ECO:0000255" key="2">
    <source>
        <dbReference type="PROSITE-ProRule" id="PRU00070"/>
    </source>
</evidence>
<evidence type="ECO:0000256" key="3">
    <source>
        <dbReference type="SAM" id="MobiDB-lite"/>
    </source>
</evidence>
<evidence type="ECO:0000269" key="4">
    <source>
    </source>
</evidence>
<evidence type="ECO:0000303" key="5">
    <source>
    </source>
</evidence>
<evidence type="ECO:0000305" key="6"/>
<protein>
    <recommendedName>
        <fullName>Doublesex- and mab-3-related transcription factor 1</fullName>
    </recommendedName>
</protein>
<name>DMRT1_XENTR</name>
<sequence length="337" mass="36900">MQNNEEPFSKTRSSGQHPSGVHGKKSPRLPKCARCRNHGYASPLKGHKRFCMWRDCQCKKCSLIAERQRVMAAQVALRRQQAQEEELGISHPIPLPIAAELLIKREHGGSSSCLMLESSSTQTTSTSTSGSTTSSEGKMLIQEIPSITSRGHLESTSDLVMDSPYYSNFYQPPLYPYYNNLYNYPPYQMAVATESTSGNDMGGISGPSMKNSHRNHPAAYVPSQSGNQWQMKNGENRFPGHSASSQFRMHSYYPPYLGQSVPNPVCVPPFLTFEEIPSYSEAKASVALSPPSSQDSGIISLSSNSPVSNESTKGAAEQEPNSESSAFTVTTAGEDRE</sequence>
<feature type="chain" id="PRO_0000284733" description="Doublesex- and mab-3-related transcription factor 1">
    <location>
        <begin position="1"/>
        <end position="337"/>
    </location>
</feature>
<feature type="DNA-binding region" description="DM" evidence="2">
    <location>
        <begin position="32"/>
        <end position="79"/>
    </location>
</feature>
<feature type="region of interest" description="Disordered" evidence="3">
    <location>
        <begin position="1"/>
        <end position="28"/>
    </location>
</feature>
<feature type="region of interest" description="Disordered" evidence="3">
    <location>
        <begin position="113"/>
        <end position="136"/>
    </location>
</feature>
<feature type="region of interest" description="Disordered" evidence="3">
    <location>
        <begin position="287"/>
        <end position="337"/>
    </location>
</feature>
<feature type="compositionally biased region" description="Polar residues" evidence="3">
    <location>
        <begin position="1"/>
        <end position="17"/>
    </location>
</feature>
<feature type="compositionally biased region" description="Low complexity" evidence="3">
    <location>
        <begin position="113"/>
        <end position="135"/>
    </location>
</feature>
<feature type="compositionally biased region" description="Low complexity" evidence="3">
    <location>
        <begin position="292"/>
        <end position="311"/>
    </location>
</feature>
<feature type="compositionally biased region" description="Polar residues" evidence="3">
    <location>
        <begin position="319"/>
        <end position="331"/>
    </location>
</feature>
<organism>
    <name type="scientific">Xenopus tropicalis</name>
    <name type="common">Western clawed frog</name>
    <name type="synonym">Silurana tropicalis</name>
    <dbReference type="NCBI Taxonomy" id="8364"/>
    <lineage>
        <taxon>Eukaryota</taxon>
        <taxon>Metazoa</taxon>
        <taxon>Chordata</taxon>
        <taxon>Craniata</taxon>
        <taxon>Vertebrata</taxon>
        <taxon>Euteleostomi</taxon>
        <taxon>Amphibia</taxon>
        <taxon>Batrachia</taxon>
        <taxon>Anura</taxon>
        <taxon>Pipoidea</taxon>
        <taxon>Pipidae</taxon>
        <taxon>Xenopodinae</taxon>
        <taxon>Xenopus</taxon>
        <taxon>Silurana</taxon>
    </lineage>
</organism>
<keyword id="KW-0010">Activator</keyword>
<keyword id="KW-0217">Developmental protein</keyword>
<keyword id="KW-0221">Differentiation</keyword>
<keyword id="KW-0238">DNA-binding</keyword>
<keyword id="KW-0479">Metal-binding</keyword>
<keyword id="KW-0539">Nucleus</keyword>
<keyword id="KW-1185">Reference proteome</keyword>
<keyword id="KW-0678">Repressor</keyword>
<keyword id="KW-0726">Sexual differentiation</keyword>
<keyword id="KW-0804">Transcription</keyword>
<keyword id="KW-0805">Transcription regulation</keyword>
<keyword id="KW-0862">Zinc</keyword>
<dbReference type="EMBL" id="AAMC01047992">
    <property type="status" value="NOT_ANNOTATED_CDS"/>
    <property type="molecule type" value="Genomic_DNA"/>
</dbReference>
<dbReference type="SMR" id="P85119"/>
<dbReference type="FunCoup" id="P85119">
    <property type="interactions" value="684"/>
</dbReference>
<dbReference type="STRING" id="8364.ENSXETP00000053992"/>
<dbReference type="PaxDb" id="8364-ENSXETP00000004858"/>
<dbReference type="eggNOG" id="KOG3815">
    <property type="taxonomic scope" value="Eukaryota"/>
</dbReference>
<dbReference type="InParanoid" id="P85119"/>
<dbReference type="Proteomes" id="UP000008143">
    <property type="component" value="Unplaced"/>
</dbReference>
<dbReference type="GO" id="GO:0005634">
    <property type="term" value="C:nucleus"/>
    <property type="evidence" value="ECO:0007669"/>
    <property type="project" value="UniProtKB-SubCell"/>
</dbReference>
<dbReference type="GO" id="GO:0046872">
    <property type="term" value="F:metal ion binding"/>
    <property type="evidence" value="ECO:0007669"/>
    <property type="project" value="UniProtKB-KW"/>
</dbReference>
<dbReference type="GO" id="GO:0043565">
    <property type="term" value="F:sequence-specific DNA binding"/>
    <property type="evidence" value="ECO:0007669"/>
    <property type="project" value="InterPro"/>
</dbReference>
<dbReference type="GO" id="GO:0030154">
    <property type="term" value="P:cell differentiation"/>
    <property type="evidence" value="ECO:0007669"/>
    <property type="project" value="UniProtKB-KW"/>
</dbReference>
<dbReference type="GO" id="GO:0008584">
    <property type="term" value="P:male gonad development"/>
    <property type="evidence" value="ECO:0000250"/>
    <property type="project" value="UniProtKB"/>
</dbReference>
<dbReference type="GO" id="GO:0045893">
    <property type="term" value="P:positive regulation of DNA-templated transcription"/>
    <property type="evidence" value="ECO:0000250"/>
    <property type="project" value="UniProtKB"/>
</dbReference>
<dbReference type="FunFam" id="4.10.1040.10:FF:000001">
    <property type="entry name" value="doublesex- and mab-3-related transcription factor 1"/>
    <property type="match status" value="1"/>
</dbReference>
<dbReference type="Gene3D" id="4.10.1040.10">
    <property type="entry name" value="DM DNA-binding domain"/>
    <property type="match status" value="1"/>
</dbReference>
<dbReference type="InterPro" id="IPR001275">
    <property type="entry name" value="DM_DNA-bd"/>
</dbReference>
<dbReference type="InterPro" id="IPR036407">
    <property type="entry name" value="DM_DNA-bd_sf"/>
</dbReference>
<dbReference type="InterPro" id="IPR026607">
    <property type="entry name" value="DMRT"/>
</dbReference>
<dbReference type="InterPro" id="IPR022114">
    <property type="entry name" value="DMRT1-like"/>
</dbReference>
<dbReference type="PANTHER" id="PTHR12322">
    <property type="entry name" value="DOUBLESEX AND MAB-3 RELATED TRANSCRIPTION FACTOR DMRT"/>
    <property type="match status" value="1"/>
</dbReference>
<dbReference type="PANTHER" id="PTHR12322:SF70">
    <property type="entry name" value="DOUBLESEX- AND MAB-3-RELATED TRANSCRIPTION FACTOR 1"/>
    <property type="match status" value="1"/>
</dbReference>
<dbReference type="Pfam" id="PF00751">
    <property type="entry name" value="DM"/>
    <property type="match status" value="1"/>
</dbReference>
<dbReference type="Pfam" id="PF12374">
    <property type="entry name" value="Dmrt1"/>
    <property type="match status" value="1"/>
</dbReference>
<dbReference type="SMART" id="SM00301">
    <property type="entry name" value="DM"/>
    <property type="match status" value="1"/>
</dbReference>
<dbReference type="SUPFAM" id="SSF82927">
    <property type="entry name" value="Cysteine-rich DNA binding domain, (DM domain)"/>
    <property type="match status" value="1"/>
</dbReference>
<dbReference type="PROSITE" id="PS40000">
    <property type="entry name" value="DM_1"/>
    <property type="match status" value="1"/>
</dbReference>
<dbReference type="PROSITE" id="PS50809">
    <property type="entry name" value="DM_2"/>
    <property type="match status" value="1"/>
</dbReference>
<comment type="function">
    <text evidence="1">Transcription factor that plays a key role in male sex determination and differentiation by controlling testis development and germ cell proliferation. Acts both as a transcription repressor and activator (By similarity).</text>
</comment>
<comment type="subcellular location">
    <subcellularLocation>
        <location evidence="2">Nucleus</location>
    </subcellularLocation>
</comment>
<comment type="similarity">
    <text evidence="6">Belongs to the DMRT family.</text>
</comment>
<gene>
    <name evidence="5" type="primary">dmrt1</name>
</gene>
<accession>P85119</accession>
<accession>F7DFV8</accession>
<reference evidence="6" key="1">
    <citation type="journal article" date="2006" name="Dev. Growth Differ.">
        <title>Expression and promoter analysis of Xenopus DMRT1 and functional characterization of the transactivation property of its protein.</title>
        <authorList>
            <person name="Yoshimoto S."/>
            <person name="Okada E."/>
            <person name="Oishi T."/>
            <person name="Numagami R."/>
            <person name="Umemoto H."/>
            <person name="Tamura K."/>
            <person name="Kanda H."/>
            <person name="Shiba T."/>
            <person name="Takamatsu N."/>
            <person name="Ito M."/>
        </authorList>
    </citation>
    <scope>NUCLEOTIDE SEQUENCE [MRNA]</scope>
    <source>
        <tissue evidence="4">Testis</tissue>
    </source>
</reference>
<reference key="2">
    <citation type="journal article" date="2010" name="Science">
        <title>The genome of the Western clawed frog Xenopus tropicalis.</title>
        <authorList>
            <person name="Hellsten U."/>
            <person name="Harland R.M."/>
            <person name="Gilchrist M.J."/>
            <person name="Hendrix D."/>
            <person name="Jurka J."/>
            <person name="Kapitonov V."/>
            <person name="Ovcharenko I."/>
            <person name="Putnam N.H."/>
            <person name="Shu S."/>
            <person name="Taher L."/>
            <person name="Blitz I.L."/>
            <person name="Blumberg B."/>
            <person name="Dichmann D.S."/>
            <person name="Dubchak I."/>
            <person name="Amaya E."/>
            <person name="Detter J.C."/>
            <person name="Fletcher R."/>
            <person name="Gerhard D.S."/>
            <person name="Goodstein D."/>
            <person name="Graves T."/>
            <person name="Grigoriev I.V."/>
            <person name="Grimwood J."/>
            <person name="Kawashima T."/>
            <person name="Lindquist E."/>
            <person name="Lucas S.M."/>
            <person name="Mead P.E."/>
            <person name="Mitros T."/>
            <person name="Ogino H."/>
            <person name="Ohta Y."/>
            <person name="Poliakov A.V."/>
            <person name="Pollet N."/>
            <person name="Robert J."/>
            <person name="Salamov A."/>
            <person name="Sater A.K."/>
            <person name="Schmutz J."/>
            <person name="Terry A."/>
            <person name="Vize P.D."/>
            <person name="Warren W.C."/>
            <person name="Wells D."/>
            <person name="Wills A."/>
            <person name="Wilson R.K."/>
            <person name="Zimmerman L.B."/>
            <person name="Zorn A.M."/>
            <person name="Grainger R."/>
            <person name="Grammer T."/>
            <person name="Khokha M.K."/>
            <person name="Richardson P.M."/>
            <person name="Rokhsar D.S."/>
        </authorList>
    </citation>
    <scope>NUCLEOTIDE SEQUENCE [LARGE SCALE GENOMIC DNA]</scope>
</reference>